<name>VIRE_HYPVG</name>
<gene>
    <name evidence="5" type="primary">virE</name>
    <name type="ORF">TRIVIDRAFT_47601</name>
</gene>
<protein>
    <recommendedName>
        <fullName evidence="5">Cytochrome P450 monooxygenase virE</fullName>
        <ecNumber evidence="4">1.-.-.-</ecNumber>
    </recommendedName>
    <alternativeName>
        <fullName evidence="5">Trichoxide biosynthesis protein virE</fullName>
    </alternativeName>
    <alternativeName>
        <fullName evidence="5">Virensol biosynthesis cluster protein E</fullName>
    </alternativeName>
</protein>
<reference key="1">
    <citation type="journal article" date="2011" name="Genome Biol.">
        <title>Comparative genome sequence analysis underscores mycoparasitism as the ancestral life style of Trichoderma.</title>
        <authorList>
            <person name="Kubicek C.P."/>
            <person name="Herrera-Estrella A."/>
            <person name="Seidl-Seiboth V."/>
            <person name="Martinez D.A."/>
            <person name="Druzhinina I.S."/>
            <person name="Thon M."/>
            <person name="Zeilinger S."/>
            <person name="Casas-Flores S."/>
            <person name="Horwitz B.A."/>
            <person name="Mukherjee P.K."/>
            <person name="Mukherjee M."/>
            <person name="Kredics L."/>
            <person name="Alcaraz L.D."/>
            <person name="Aerts A."/>
            <person name="Antal Z."/>
            <person name="Atanasova L."/>
            <person name="Cervantes-Badillo M.G."/>
            <person name="Challacombe J."/>
            <person name="Chertkov O."/>
            <person name="McCluskey K."/>
            <person name="Coulpier F."/>
            <person name="Deshpande N."/>
            <person name="von Doehren H."/>
            <person name="Ebbole D.J."/>
            <person name="Esquivel-Naranjo E.U."/>
            <person name="Fekete E."/>
            <person name="Flipphi M."/>
            <person name="Glaser F."/>
            <person name="Gomez-Rodriguez E.Y."/>
            <person name="Gruber S."/>
            <person name="Han C."/>
            <person name="Henrissat B."/>
            <person name="Hermosa R."/>
            <person name="Hernandez-Onate M."/>
            <person name="Karaffa L."/>
            <person name="Kosti I."/>
            <person name="Le Crom S."/>
            <person name="Lindquist E."/>
            <person name="Lucas S."/>
            <person name="Luebeck M."/>
            <person name="Luebeck P.S."/>
            <person name="Margeot A."/>
            <person name="Metz B."/>
            <person name="Misra M."/>
            <person name="Nevalainen H."/>
            <person name="Omann M."/>
            <person name="Packer N."/>
            <person name="Perrone G."/>
            <person name="Uresti-Rivera E.E."/>
            <person name="Salamov A."/>
            <person name="Schmoll M."/>
            <person name="Seiboth B."/>
            <person name="Shapiro H."/>
            <person name="Sukno S."/>
            <person name="Tamayo-Ramos J.A."/>
            <person name="Tisch D."/>
            <person name="Wiest A."/>
            <person name="Wilkinson H.H."/>
            <person name="Zhang M."/>
            <person name="Coutinho P.M."/>
            <person name="Kenerley C.M."/>
            <person name="Monte E."/>
            <person name="Baker S.E."/>
            <person name="Grigoriev I.V."/>
        </authorList>
    </citation>
    <scope>NUCLEOTIDE SEQUENCE [LARGE SCALE GENOMIC DNA]</scope>
    <source>
        <strain>Gv29-8 / FGSC 10586</strain>
    </source>
</reference>
<reference key="2">
    <citation type="journal article" date="2019" name="J. Am. Chem. Soc.">
        <title>Fungal highly reducing polyketide synthases biosynthesize salicylaldehydes that are precursors to epoxycyclohexenol natural products.</title>
        <authorList>
            <person name="Liu L."/>
            <person name="Tang M.C."/>
            <person name="Tang Y."/>
        </authorList>
    </citation>
    <scope>FUNCTION</scope>
    <scope>CATALYTIC ACTIVITY</scope>
    <scope>PATHWAY</scope>
</reference>
<evidence type="ECO:0000250" key="1">
    <source>
        <dbReference type="UniProtKB" id="P04798"/>
    </source>
</evidence>
<evidence type="ECO:0000255" key="2"/>
<evidence type="ECO:0000255" key="3">
    <source>
        <dbReference type="PROSITE-ProRule" id="PRU00498"/>
    </source>
</evidence>
<evidence type="ECO:0000269" key="4">
    <source>
    </source>
</evidence>
<evidence type="ECO:0000303" key="5">
    <source>
    </source>
</evidence>
<evidence type="ECO:0000305" key="6"/>
<keyword id="KW-0325">Glycoprotein</keyword>
<keyword id="KW-0349">Heme</keyword>
<keyword id="KW-0408">Iron</keyword>
<keyword id="KW-0479">Metal-binding</keyword>
<keyword id="KW-0503">Monooxygenase</keyword>
<keyword id="KW-0560">Oxidoreductase</keyword>
<keyword id="KW-1185">Reference proteome</keyword>
<keyword id="KW-0732">Signal</keyword>
<organism>
    <name type="scientific">Hypocrea virens (strain Gv29-8 / FGSC 10586)</name>
    <name type="common">Gliocladium virens</name>
    <name type="synonym">Trichoderma virens</name>
    <dbReference type="NCBI Taxonomy" id="413071"/>
    <lineage>
        <taxon>Eukaryota</taxon>
        <taxon>Fungi</taxon>
        <taxon>Dikarya</taxon>
        <taxon>Ascomycota</taxon>
        <taxon>Pezizomycotina</taxon>
        <taxon>Sordariomycetes</taxon>
        <taxon>Hypocreomycetidae</taxon>
        <taxon>Hypocreales</taxon>
        <taxon>Hypocreaceae</taxon>
        <taxon>Trichoderma</taxon>
    </lineage>
</organism>
<dbReference type="EC" id="1.-.-.-" evidence="4"/>
<dbReference type="EMBL" id="ABDF02000086">
    <property type="protein sequence ID" value="EHK18434.1"/>
    <property type="molecule type" value="Genomic_DNA"/>
</dbReference>
<dbReference type="RefSeq" id="XP_013952634.1">
    <property type="nucleotide sequence ID" value="XM_014097159.1"/>
</dbReference>
<dbReference type="SMR" id="G9N4A8"/>
<dbReference type="STRING" id="413071.G9N4A8"/>
<dbReference type="GlyCosmos" id="G9N4A8">
    <property type="glycosylation" value="1 site, No reported glycans"/>
</dbReference>
<dbReference type="EnsemblFungi" id="EHK18434">
    <property type="protein sequence ID" value="EHK18434"/>
    <property type="gene ID" value="TRIVIDRAFT_47601"/>
</dbReference>
<dbReference type="GeneID" id="25794681"/>
<dbReference type="VEuPathDB" id="FungiDB:TRIVIDRAFT_47601"/>
<dbReference type="eggNOG" id="KOG0156">
    <property type="taxonomic scope" value="Eukaryota"/>
</dbReference>
<dbReference type="HOGENOM" id="CLU_001570_2_1_1"/>
<dbReference type="InParanoid" id="G9N4A8"/>
<dbReference type="OMA" id="WTLGTLH"/>
<dbReference type="OrthoDB" id="1103324at2759"/>
<dbReference type="Proteomes" id="UP000007115">
    <property type="component" value="Unassembled WGS sequence"/>
</dbReference>
<dbReference type="GO" id="GO:0020037">
    <property type="term" value="F:heme binding"/>
    <property type="evidence" value="ECO:0007669"/>
    <property type="project" value="InterPro"/>
</dbReference>
<dbReference type="GO" id="GO:0005506">
    <property type="term" value="F:iron ion binding"/>
    <property type="evidence" value="ECO:0007669"/>
    <property type="project" value="InterPro"/>
</dbReference>
<dbReference type="GO" id="GO:0004497">
    <property type="term" value="F:monooxygenase activity"/>
    <property type="evidence" value="ECO:0007669"/>
    <property type="project" value="UniProtKB-KW"/>
</dbReference>
<dbReference type="GO" id="GO:0016705">
    <property type="term" value="F:oxidoreductase activity, acting on paired donors, with incorporation or reduction of molecular oxygen"/>
    <property type="evidence" value="ECO:0007669"/>
    <property type="project" value="InterPro"/>
</dbReference>
<dbReference type="CDD" id="cd11065">
    <property type="entry name" value="CYP64-like"/>
    <property type="match status" value="1"/>
</dbReference>
<dbReference type="Gene3D" id="1.10.630.10">
    <property type="entry name" value="Cytochrome P450"/>
    <property type="match status" value="1"/>
</dbReference>
<dbReference type="InterPro" id="IPR001128">
    <property type="entry name" value="Cyt_P450"/>
</dbReference>
<dbReference type="InterPro" id="IPR002401">
    <property type="entry name" value="Cyt_P450_E_grp-I"/>
</dbReference>
<dbReference type="InterPro" id="IPR036396">
    <property type="entry name" value="Cyt_P450_sf"/>
</dbReference>
<dbReference type="InterPro" id="IPR050364">
    <property type="entry name" value="Cytochrome_P450_fung"/>
</dbReference>
<dbReference type="PANTHER" id="PTHR46300:SF2">
    <property type="entry name" value="CYTOCHROME P450 MONOOXYGENASE ALNH-RELATED"/>
    <property type="match status" value="1"/>
</dbReference>
<dbReference type="PANTHER" id="PTHR46300">
    <property type="entry name" value="P450, PUTATIVE (EUROFUNG)-RELATED-RELATED"/>
    <property type="match status" value="1"/>
</dbReference>
<dbReference type="Pfam" id="PF00067">
    <property type="entry name" value="p450"/>
    <property type="match status" value="1"/>
</dbReference>
<dbReference type="PRINTS" id="PR00463">
    <property type="entry name" value="EP450I"/>
</dbReference>
<dbReference type="PRINTS" id="PR00385">
    <property type="entry name" value="P450"/>
</dbReference>
<dbReference type="SUPFAM" id="SSF48264">
    <property type="entry name" value="Cytochrome P450"/>
    <property type="match status" value="1"/>
</dbReference>
<proteinExistence type="evidence at protein level"/>
<accession>G9N4A8</accession>
<sequence>MPKPWVVFGLGTLVLFLWRLNKIGRRPKNYPPGPPTLPLIGNLHLMPKKNAHLQFQRWAEEYGPVYSLMLGTKVAIVLSSDVAVKDLLDKRSSIYSGRPELYMGQEIMSGGNRPLFMGINSVWRRVRKLAHGLLNVKVSRTYVPYQDLESRDMLMGLLESPKDFLNHIRRYTTSLTTQMAFGYRTPSSDDKGLLEMFENFDELSRLTGSQSAAILDLYPIARILPDFLLPARRLGREYYEREKKLFMKHFLNARQQLNSGTSKPCCAIDLLRAQKEYGFSDEFGCYLSGSLLQAGSETTAIILTGFFQAMLVFPEVSKEAQEEIDRVCGDRLPDLNDYPNLPYIRACLKESLRWMPATALGVPHAVIQDDSYLGYHIPKDAGLILNVWAIHNDSKRHPDPRRYNPARWAGDNQNSAQAAVNPDPTKRDHFVFGAGRRLCQGMHIADRSLFLAISRTLWAFDLKRPVDKETGHEIIPDVDNIKDGLFISPMPFAADIVPRSESRAAAVRQEWENVAGLLDDDMQWKTVPEGLKWKDYEPLDDENEDLLESLS</sequence>
<feature type="signal peptide" evidence="2">
    <location>
        <begin position="1"/>
        <end position="25"/>
    </location>
</feature>
<feature type="chain" id="PRO_5003524545" description="Cytochrome P450 monooxygenase virE" evidence="2">
    <location>
        <begin position="26"/>
        <end position="551"/>
    </location>
</feature>
<feature type="binding site" description="axial binding residue" evidence="1">
    <location>
        <position position="439"/>
    </location>
    <ligand>
        <name>heme</name>
        <dbReference type="ChEBI" id="CHEBI:30413"/>
    </ligand>
    <ligandPart>
        <name>Fe</name>
        <dbReference type="ChEBI" id="CHEBI:18248"/>
    </ligandPart>
</feature>
<feature type="glycosylation site" description="N-linked (GlcNAc...) asparagine" evidence="3">
    <location>
        <position position="392"/>
    </location>
</feature>
<comment type="function">
    <text evidence="4">Cytochrome P450 monooxygenase; part of the gene cluster that mediates the biosynthesis of virensols and trichoxide, fungal natural products that contain or are derived from a salicylaldehyde core (PubMed:31790246). The pathway begins with the synthesis of the reduced chain in virensol C by the highly reducing polyketide synthase virA via condensation of one acetate and 8 malonate units (PubMed:31790246). VirA has interesting programming rules since the first 2 ketides are fully reduced, the 3 following ketides undergo beta-dehydration, and the last 3 ketides are only reduced to beta-hydroxys to yield the trihydroxy portion (PubMed:31790246). The production of aldehyde virensol C by virA alone is surprising, since virA does not contain a reductase (R) domain that is typically associated with reductive product release in HRPKS (PubMed:31790246). The cupin-domain enzyme virC is involved in enhancing virA product turnover (PubMed:31790246). The short-chain dehydrogenase virB then oxidizes the C-7 alcohol of virensol C to a ketone, yielding virensol D (PubMed:31790246). Virensol D is further transformed to salicylaldehyde 5-deoxyaurocitrin by the short-chain dehydrogenase virD (PubMed:31790246). VirD catalyzes the dehydrogenation of C-3 to form the beta-ketone aldehyde, which is followed by the generation of the nucleophilic C-2 that is required for the intramolecular aldol condensation between C-2 and C-7, itself followed by dehydration and aromatization which leads to salicylaldehyde 5-deoxyaurocitrin (PubMed:31790246). While the dehydrogenation of virensol D is definitely catalyzed by virD, the aldol condensation and dehydration may be uncatalyzed or assisted by virD (PubMed:31790246). The short chain dehydrogenase virG then converts salicylaldehyde 5-deoxyaurocitrin into virensol B which is further hydroxylated by the cytochrome P450 monooxygenase virE to yield the hydroquinone virensol A (PubMed:31790246). VirI then may oxidize virensol A to form the quinone, while virH performs the epoxidation (PubMed:31790246). Finally, the two remaining short-chain dehydrogenases, virK and virL, are probably responsible for reducing the ketones to the corresponding alcohols to furnish the epoxycyclohexanol structure in trichoxide (PubMed:31790246).</text>
</comment>
<comment type="cofactor">
    <cofactor evidence="1">
        <name>heme</name>
        <dbReference type="ChEBI" id="CHEBI:30413"/>
    </cofactor>
</comment>
<comment type="pathway">
    <text evidence="4">Secondary metabolite biosynthesis.</text>
</comment>
<comment type="similarity">
    <text evidence="6">Belongs to the cytochrome P450 family.</text>
</comment>